<accession>Q48LY3</accession>
<feature type="chain" id="PRO_0000273678" description="Exodeoxyribonuclease 7 large subunit">
    <location>
        <begin position="1"/>
        <end position="459"/>
    </location>
</feature>
<gene>
    <name evidence="1" type="primary">xseA</name>
    <name type="ordered locus">PSPPH_1331</name>
</gene>
<sequence>MIKDPFARLGLEREVLTVSQLNGRARVLLEDVFSSIWVEGEISNLSRPASGHVYFTLKDSGAQVRCALFRQSAARVRQALKDGLQVKVRGKVSLFEGRGDYQLILDTVEPAGDGALRLAFDALKAKLSDEGLFSAERKIALPVHPQRIGIISSPTGAVIRDIISVFRRRAPRVELTLIPTAVQGREAINQIVRALKLADSRGFDALILARGGGSLEDLWCFNEEAVARAIDACVTPIVSAVGHETDVSISDFVADVRAPTPSAAAELLAPDSSDLHRRVDSLHRRLVSRMQDRLMRERLRLEGISRRLRHPGERLRQQSQRLDDLDMRLRRAFEQNMHQRQVRLAHMQSRLAAQHPGRTLGFLRQRLDALAERLPRAIREQIKARRLQLQSQAQTLNVVSPLATLGRGYSILLDERGHAIRNAAQTRTGQRLTARLGEGELQVRVEDNHLTPVTLSLLD</sequence>
<proteinExistence type="inferred from homology"/>
<dbReference type="EC" id="3.1.11.6" evidence="1"/>
<dbReference type="EMBL" id="CP000058">
    <property type="protein sequence ID" value="AAZ35023.1"/>
    <property type="molecule type" value="Genomic_DNA"/>
</dbReference>
<dbReference type="SMR" id="Q48LY3"/>
<dbReference type="KEGG" id="psp:PSPPH_1331"/>
<dbReference type="eggNOG" id="COG1570">
    <property type="taxonomic scope" value="Bacteria"/>
</dbReference>
<dbReference type="HOGENOM" id="CLU_023625_3_1_6"/>
<dbReference type="Proteomes" id="UP000000551">
    <property type="component" value="Chromosome"/>
</dbReference>
<dbReference type="GO" id="GO:0005737">
    <property type="term" value="C:cytoplasm"/>
    <property type="evidence" value="ECO:0007669"/>
    <property type="project" value="UniProtKB-SubCell"/>
</dbReference>
<dbReference type="GO" id="GO:0009318">
    <property type="term" value="C:exodeoxyribonuclease VII complex"/>
    <property type="evidence" value="ECO:0007669"/>
    <property type="project" value="InterPro"/>
</dbReference>
<dbReference type="GO" id="GO:0008855">
    <property type="term" value="F:exodeoxyribonuclease VII activity"/>
    <property type="evidence" value="ECO:0007669"/>
    <property type="project" value="UniProtKB-UniRule"/>
</dbReference>
<dbReference type="GO" id="GO:0003676">
    <property type="term" value="F:nucleic acid binding"/>
    <property type="evidence" value="ECO:0007669"/>
    <property type="project" value="InterPro"/>
</dbReference>
<dbReference type="GO" id="GO:0006308">
    <property type="term" value="P:DNA catabolic process"/>
    <property type="evidence" value="ECO:0007669"/>
    <property type="project" value="UniProtKB-UniRule"/>
</dbReference>
<dbReference type="CDD" id="cd04489">
    <property type="entry name" value="ExoVII_LU_OBF"/>
    <property type="match status" value="1"/>
</dbReference>
<dbReference type="Gene3D" id="2.40.50.1010">
    <property type="match status" value="1"/>
</dbReference>
<dbReference type="HAMAP" id="MF_00378">
    <property type="entry name" value="Exonuc_7_L"/>
    <property type="match status" value="1"/>
</dbReference>
<dbReference type="InterPro" id="IPR003753">
    <property type="entry name" value="Exonuc_VII_L"/>
</dbReference>
<dbReference type="InterPro" id="IPR020579">
    <property type="entry name" value="Exonuc_VII_lsu_C"/>
</dbReference>
<dbReference type="InterPro" id="IPR025824">
    <property type="entry name" value="OB-fold_nuc-bd_dom"/>
</dbReference>
<dbReference type="NCBIfam" id="TIGR00237">
    <property type="entry name" value="xseA"/>
    <property type="match status" value="1"/>
</dbReference>
<dbReference type="PANTHER" id="PTHR30008">
    <property type="entry name" value="EXODEOXYRIBONUCLEASE 7 LARGE SUBUNIT"/>
    <property type="match status" value="1"/>
</dbReference>
<dbReference type="PANTHER" id="PTHR30008:SF0">
    <property type="entry name" value="EXODEOXYRIBONUCLEASE 7 LARGE SUBUNIT"/>
    <property type="match status" value="1"/>
</dbReference>
<dbReference type="Pfam" id="PF02601">
    <property type="entry name" value="Exonuc_VII_L"/>
    <property type="match status" value="1"/>
</dbReference>
<dbReference type="Pfam" id="PF13742">
    <property type="entry name" value="tRNA_anti_2"/>
    <property type="match status" value="1"/>
</dbReference>
<protein>
    <recommendedName>
        <fullName evidence="1">Exodeoxyribonuclease 7 large subunit</fullName>
        <ecNumber evidence="1">3.1.11.6</ecNumber>
    </recommendedName>
    <alternativeName>
        <fullName evidence="1">Exodeoxyribonuclease VII large subunit</fullName>
        <shortName evidence="1">Exonuclease VII large subunit</shortName>
    </alternativeName>
</protein>
<name>EX7L_PSE14</name>
<reference key="1">
    <citation type="journal article" date="2005" name="J. Bacteriol.">
        <title>Whole-genome sequence analysis of Pseudomonas syringae pv. phaseolicola 1448A reveals divergence among pathovars in genes involved in virulence and transposition.</title>
        <authorList>
            <person name="Joardar V."/>
            <person name="Lindeberg M."/>
            <person name="Jackson R.W."/>
            <person name="Selengut J."/>
            <person name="Dodson R."/>
            <person name="Brinkac L.M."/>
            <person name="Daugherty S.C."/>
            <person name="DeBoy R.T."/>
            <person name="Durkin A.S."/>
            <person name="Gwinn Giglio M."/>
            <person name="Madupu R."/>
            <person name="Nelson W.C."/>
            <person name="Rosovitz M.J."/>
            <person name="Sullivan S.A."/>
            <person name="Crabtree J."/>
            <person name="Creasy T."/>
            <person name="Davidsen T.M."/>
            <person name="Haft D.H."/>
            <person name="Zafar N."/>
            <person name="Zhou L."/>
            <person name="Halpin R."/>
            <person name="Holley T."/>
            <person name="Khouri H.M."/>
            <person name="Feldblyum T.V."/>
            <person name="White O."/>
            <person name="Fraser C.M."/>
            <person name="Chatterjee A.K."/>
            <person name="Cartinhour S."/>
            <person name="Schneider D."/>
            <person name="Mansfield J.W."/>
            <person name="Collmer A."/>
            <person name="Buell R."/>
        </authorList>
    </citation>
    <scope>NUCLEOTIDE SEQUENCE [LARGE SCALE GENOMIC DNA]</scope>
    <source>
        <strain>1448A / Race 6</strain>
    </source>
</reference>
<keyword id="KW-0963">Cytoplasm</keyword>
<keyword id="KW-0269">Exonuclease</keyword>
<keyword id="KW-0378">Hydrolase</keyword>
<keyword id="KW-0540">Nuclease</keyword>
<evidence type="ECO:0000255" key="1">
    <source>
        <dbReference type="HAMAP-Rule" id="MF_00378"/>
    </source>
</evidence>
<comment type="function">
    <text evidence="1">Bidirectionally degrades single-stranded DNA into large acid-insoluble oligonucleotides, which are then degraded further into small acid-soluble oligonucleotides.</text>
</comment>
<comment type="catalytic activity">
    <reaction evidence="1">
        <text>Exonucleolytic cleavage in either 5'- to 3'- or 3'- to 5'-direction to yield nucleoside 5'-phosphates.</text>
        <dbReference type="EC" id="3.1.11.6"/>
    </reaction>
</comment>
<comment type="subunit">
    <text evidence="1">Heterooligomer composed of large and small subunits.</text>
</comment>
<comment type="subcellular location">
    <subcellularLocation>
        <location evidence="1">Cytoplasm</location>
    </subcellularLocation>
</comment>
<comment type="similarity">
    <text evidence="1">Belongs to the XseA family.</text>
</comment>
<organism>
    <name type="scientific">Pseudomonas savastanoi pv. phaseolicola (strain 1448A / Race 6)</name>
    <name type="common">Pseudomonas syringae pv. phaseolicola (strain 1448A / Race 6)</name>
    <dbReference type="NCBI Taxonomy" id="264730"/>
    <lineage>
        <taxon>Bacteria</taxon>
        <taxon>Pseudomonadati</taxon>
        <taxon>Pseudomonadota</taxon>
        <taxon>Gammaproteobacteria</taxon>
        <taxon>Pseudomonadales</taxon>
        <taxon>Pseudomonadaceae</taxon>
        <taxon>Pseudomonas</taxon>
    </lineage>
</organism>